<gene>
    <name type="primary">SSB1</name>
    <name type="ordered locus">ZYRO0C10450g</name>
</gene>
<proteinExistence type="inferred from homology"/>
<keyword id="KW-0067">ATP-binding</keyword>
<keyword id="KW-0143">Chaperone</keyword>
<keyword id="KW-0963">Cytoplasm</keyword>
<keyword id="KW-0378">Hydrolase</keyword>
<keyword id="KW-0547">Nucleotide-binding</keyword>
<keyword id="KW-0648">Protein biosynthesis</keyword>
<keyword id="KW-1185">Reference proteome</keyword>
<sequence>MAEGVFQGAIGIDLGTTYSCVATYESSVEIIANEQGNRVTPSFVAFTPEERLIGDAAKNQAALNPENTVFDAKRLIGRRFDDESVQKDRKTWPFKLIDVEGNPVVEVQYLGETKTFSPQEISSMVLTKMKEIAEAKIGQKVEKAVITVPAYFNDAQRQATKDAGSISGLNVLRIINEPTAAAIAYGLGAGKSEKERHVLIFDLGGGTFDVSLLHIAGGVYTVKSTSGNTHLGGQDFDTNMLEHFKNEFKKKTGNDISGDARALRRLRTACERAKRTLSSVTQTTIEVDSLYNGDDFETSITRARFEDLNSSLFKSTLEPVEQVLKDAKVPKTEIDEVVLVGGSTRIPKVQKMLSDFFEGKQLEKSINPDEAVAYGAAVQGAILTGQSTSEDTKDLLLLDVAPLSLGVGMQGDIFGIVVPRNTTVPTIKRRTFTTVADHQSTVQFPVYQGERVNCKENTLLGEFDLKNIPPMQAGEPVLEAIFEVDANGILKVTAVEKSTGKSANITISNAVGRLSSDEIEKMVNQAEEFKAADEAFAKKHEARQRLESYVASIEQQVTDPVLSSKLKRGSKTKIESALSDALASLEIQDASTDDLRKAEVGLKRVVTKAMSSR</sequence>
<protein>
    <recommendedName>
        <fullName>Ribosome-associated molecular chaperone SSB1</fullName>
        <ecNumber>3.6.4.10</ecNumber>
    </recommendedName>
    <alternativeName>
        <fullName>Heat shock protein SSB1</fullName>
    </alternativeName>
    <alternativeName>
        <fullName>Hsp70 chaperone Ssb</fullName>
    </alternativeName>
</protein>
<reference key="1">
    <citation type="journal article" date="2004" name="Proc. Natl. Acad. Sci. U.S.A.">
        <title>Evolution of the MAT locus and its Ho endonuclease in yeast species.</title>
        <authorList>
            <person name="Butler G."/>
            <person name="Kenny C."/>
            <person name="Fagan A."/>
            <person name="Kurischko C."/>
            <person name="Gaillardin C."/>
            <person name="Wolfe K.H."/>
        </authorList>
    </citation>
    <scope>NUCLEOTIDE SEQUENCE [GENOMIC DNA]</scope>
</reference>
<reference key="2">
    <citation type="journal article" date="2009" name="Genome Res.">
        <title>Comparative genomics of protoploid Saccharomycetaceae.</title>
        <authorList>
            <consortium name="The Genolevures Consortium"/>
            <person name="Souciet J.-L."/>
            <person name="Dujon B."/>
            <person name="Gaillardin C."/>
            <person name="Johnston M."/>
            <person name="Baret P.V."/>
            <person name="Cliften P."/>
            <person name="Sherman D.J."/>
            <person name="Weissenbach J."/>
            <person name="Westhof E."/>
            <person name="Wincker P."/>
            <person name="Jubin C."/>
            <person name="Poulain J."/>
            <person name="Barbe V."/>
            <person name="Segurens B."/>
            <person name="Artiguenave F."/>
            <person name="Anthouard V."/>
            <person name="Vacherie B."/>
            <person name="Val M.-E."/>
            <person name="Fulton R.S."/>
            <person name="Minx P."/>
            <person name="Wilson R."/>
            <person name="Durrens P."/>
            <person name="Jean G."/>
            <person name="Marck C."/>
            <person name="Martin T."/>
            <person name="Nikolski M."/>
            <person name="Rolland T."/>
            <person name="Seret M.-L."/>
            <person name="Casaregola S."/>
            <person name="Despons L."/>
            <person name="Fairhead C."/>
            <person name="Fischer G."/>
            <person name="Lafontaine I."/>
            <person name="Leh V."/>
            <person name="Lemaire M."/>
            <person name="de Montigny J."/>
            <person name="Neuveglise C."/>
            <person name="Thierry A."/>
            <person name="Blanc-Lenfle I."/>
            <person name="Bleykasten C."/>
            <person name="Diffels J."/>
            <person name="Fritsch E."/>
            <person name="Frangeul L."/>
            <person name="Goeffon A."/>
            <person name="Jauniaux N."/>
            <person name="Kachouri-Lafond R."/>
            <person name="Payen C."/>
            <person name="Potier S."/>
            <person name="Pribylova L."/>
            <person name="Ozanne C."/>
            <person name="Richard G.-F."/>
            <person name="Sacerdot C."/>
            <person name="Straub M.-L."/>
            <person name="Talla E."/>
        </authorList>
    </citation>
    <scope>NUCLEOTIDE SEQUENCE [LARGE SCALE GENOMIC DNA]</scope>
    <source>
        <strain>ATCC 2623 / CBS 732 / BCRC 21506 / NBRC 1130 / NCYC 568 / NRRL Y-229</strain>
    </source>
</reference>
<dbReference type="EC" id="3.6.4.10"/>
<dbReference type="EMBL" id="AJ617309">
    <property type="protein sequence ID" value="CAE84432.1"/>
    <property type="molecule type" value="Genomic_DNA"/>
</dbReference>
<dbReference type="EMBL" id="CU928175">
    <property type="protein sequence ID" value="CAR27166.1"/>
    <property type="molecule type" value="Genomic_DNA"/>
</dbReference>
<dbReference type="RefSeq" id="XP_002496099.1">
    <property type="nucleotide sequence ID" value="XM_002496054.1"/>
</dbReference>
<dbReference type="SMR" id="Q707X3"/>
<dbReference type="FunCoup" id="Q707X3">
    <property type="interactions" value="1992"/>
</dbReference>
<dbReference type="STRING" id="559307.Q707X3"/>
<dbReference type="GeneID" id="8203314"/>
<dbReference type="KEGG" id="zro:ZYRO0C10450g"/>
<dbReference type="HOGENOM" id="CLU_005965_0_1_1"/>
<dbReference type="InParanoid" id="Q707X3"/>
<dbReference type="Proteomes" id="UP000008536">
    <property type="component" value="Chromosome C"/>
</dbReference>
<dbReference type="GO" id="GO:0005737">
    <property type="term" value="C:cytoplasm"/>
    <property type="evidence" value="ECO:0007669"/>
    <property type="project" value="UniProtKB-SubCell"/>
</dbReference>
<dbReference type="GO" id="GO:0005524">
    <property type="term" value="F:ATP binding"/>
    <property type="evidence" value="ECO:0007669"/>
    <property type="project" value="UniProtKB-KW"/>
</dbReference>
<dbReference type="GO" id="GO:0016887">
    <property type="term" value="F:ATP hydrolysis activity"/>
    <property type="evidence" value="ECO:0007669"/>
    <property type="project" value="RHEA"/>
</dbReference>
<dbReference type="GO" id="GO:0140662">
    <property type="term" value="F:ATP-dependent protein folding chaperone"/>
    <property type="evidence" value="ECO:0007669"/>
    <property type="project" value="InterPro"/>
</dbReference>
<dbReference type="GO" id="GO:0006412">
    <property type="term" value="P:translation"/>
    <property type="evidence" value="ECO:0007669"/>
    <property type="project" value="UniProtKB-KW"/>
</dbReference>
<dbReference type="CDD" id="cd24093">
    <property type="entry name" value="ASKHA_NBD_HSP70_Ssb"/>
    <property type="match status" value="1"/>
</dbReference>
<dbReference type="FunFam" id="3.90.640.10:FF:000002">
    <property type="entry name" value="Heat shock 70 kDa"/>
    <property type="match status" value="1"/>
</dbReference>
<dbReference type="FunFam" id="3.30.420.40:FF:000172">
    <property type="entry name" value="Heat shock 70 kDa protein"/>
    <property type="match status" value="1"/>
</dbReference>
<dbReference type="FunFam" id="1.20.1270.10:FF:000014">
    <property type="entry name" value="Heat shock protein 70"/>
    <property type="match status" value="1"/>
</dbReference>
<dbReference type="FunFam" id="3.30.420.40:FF:000026">
    <property type="entry name" value="Heat shock protein 70"/>
    <property type="match status" value="1"/>
</dbReference>
<dbReference type="FunFam" id="2.60.34.10:FF:000004">
    <property type="entry name" value="Heat shock protein SSB1"/>
    <property type="match status" value="1"/>
</dbReference>
<dbReference type="FunFam" id="3.30.30.30:FF:000005">
    <property type="entry name" value="Heat shock protein ssb1"/>
    <property type="match status" value="1"/>
</dbReference>
<dbReference type="Gene3D" id="1.20.1270.10">
    <property type="match status" value="1"/>
</dbReference>
<dbReference type="Gene3D" id="3.30.30.30">
    <property type="match status" value="1"/>
</dbReference>
<dbReference type="Gene3D" id="3.30.420.40">
    <property type="match status" value="2"/>
</dbReference>
<dbReference type="Gene3D" id="3.90.640.10">
    <property type="entry name" value="Actin, Chain A, domain 4"/>
    <property type="match status" value="1"/>
</dbReference>
<dbReference type="Gene3D" id="2.60.34.10">
    <property type="entry name" value="Substrate Binding Domain Of DNAk, Chain A, domain 1"/>
    <property type="match status" value="1"/>
</dbReference>
<dbReference type="InterPro" id="IPR043129">
    <property type="entry name" value="ATPase_NBD"/>
</dbReference>
<dbReference type="InterPro" id="IPR018181">
    <property type="entry name" value="Heat_shock_70_CS"/>
</dbReference>
<dbReference type="InterPro" id="IPR029048">
    <property type="entry name" value="HSP70_C_sf"/>
</dbReference>
<dbReference type="InterPro" id="IPR029047">
    <property type="entry name" value="HSP70_peptide-bd_sf"/>
</dbReference>
<dbReference type="InterPro" id="IPR013126">
    <property type="entry name" value="Hsp_70_fam"/>
</dbReference>
<dbReference type="NCBIfam" id="NF001413">
    <property type="entry name" value="PRK00290.1"/>
    <property type="match status" value="1"/>
</dbReference>
<dbReference type="PANTHER" id="PTHR19375">
    <property type="entry name" value="HEAT SHOCK PROTEIN 70KDA"/>
    <property type="match status" value="1"/>
</dbReference>
<dbReference type="Pfam" id="PF00012">
    <property type="entry name" value="HSP70"/>
    <property type="match status" value="1"/>
</dbReference>
<dbReference type="PRINTS" id="PR00301">
    <property type="entry name" value="HEATSHOCK70"/>
</dbReference>
<dbReference type="SUPFAM" id="SSF53067">
    <property type="entry name" value="Actin-like ATPase domain"/>
    <property type="match status" value="2"/>
</dbReference>
<dbReference type="SUPFAM" id="SSF100934">
    <property type="entry name" value="Heat shock protein 70kD (HSP70), C-terminal subdomain"/>
    <property type="match status" value="1"/>
</dbReference>
<dbReference type="SUPFAM" id="SSF100920">
    <property type="entry name" value="Heat shock protein 70kD (HSP70), peptide-binding domain"/>
    <property type="match status" value="1"/>
</dbReference>
<dbReference type="PROSITE" id="PS00297">
    <property type="entry name" value="HSP70_1"/>
    <property type="match status" value="1"/>
</dbReference>
<dbReference type="PROSITE" id="PS00329">
    <property type="entry name" value="HSP70_2"/>
    <property type="match status" value="1"/>
</dbReference>
<dbReference type="PROSITE" id="PS01036">
    <property type="entry name" value="HSP70_3"/>
    <property type="match status" value="1"/>
</dbReference>
<organism>
    <name type="scientific">Zygosaccharomyces rouxii (strain ATCC 2623 / CBS 732 / NBRC 1130 / NCYC 568 / NRRL Y-229)</name>
    <dbReference type="NCBI Taxonomy" id="559307"/>
    <lineage>
        <taxon>Eukaryota</taxon>
        <taxon>Fungi</taxon>
        <taxon>Dikarya</taxon>
        <taxon>Ascomycota</taxon>
        <taxon>Saccharomycotina</taxon>
        <taxon>Saccharomycetes</taxon>
        <taxon>Saccharomycetales</taxon>
        <taxon>Saccharomycetaceae</taxon>
        <taxon>Zygosaccharomyces</taxon>
    </lineage>
</organism>
<name>SSB1_ZYGRC</name>
<comment type="function">
    <text evidence="2">Ribosome-bound, Hsp70-type chaperone that assists in the cotranslational folding of newly synthesized proteins in the cytosol. Stimulates folding by interacting with nascent chains, binding to short, largely hydrophobic sequences exposed by unfolded proteins, thereby stabilizing longer, more slowly translated, and aggregation-prone nascent polypeptides and domains that cannot fold stably until fully synthesized. The Hsp70-protein substrate interaction depends on ATP-binding and on allosteric regulation between the NBD and the SBD. The ATP-bound state is characterized by a fast exchange rate of substrate (low affinity state), while in the ADP-bound state exchange is much slower (high affinity state). During the Hsp70 cycle, the chaperone switches between the ATP-bound state (open conformation) and the ADP-bound state (closed conformation) by major conformational rearrangements involving mainly the lid domain. Ssb cooperates with a specific Hsp40/Hsp70 co-chaperone termed the ribosome-associated complex (RAC), which stimulates the ATPase activity of the ribosome-associated pool of Ssbs and switches it to the high affinity substrate binding state. Hsp110 chaperone SSE1 and FES1 act as nucleotide exchange factors that cause substrate release.</text>
</comment>
<comment type="catalytic activity">
    <reaction evidence="2">
        <text>ATP + H2O = ADP + phosphate + H(+)</text>
        <dbReference type="Rhea" id="RHEA:13065"/>
        <dbReference type="ChEBI" id="CHEBI:15377"/>
        <dbReference type="ChEBI" id="CHEBI:15378"/>
        <dbReference type="ChEBI" id="CHEBI:30616"/>
        <dbReference type="ChEBI" id="CHEBI:43474"/>
        <dbReference type="ChEBI" id="CHEBI:456216"/>
        <dbReference type="EC" id="3.6.4.10"/>
    </reaction>
</comment>
<comment type="subunit">
    <text evidence="2">Binds to ribosomes. Binds close to the ribosomal tunnel exit via contacts with both ribosomal proteins and rRNA. Directly interacts with nascent polypeptides. This interaction is dependent on the ribosome-associated complex (RAC). Interacts with SSE1. Interacts with FES1.</text>
</comment>
<comment type="subcellular location">
    <subcellularLocation>
        <location evidence="2">Cytoplasm</location>
    </subcellularLocation>
    <text evidence="2">Associated with translating ribosomes.</text>
</comment>
<comment type="similarity">
    <text evidence="3">Belongs to the heat shock protein 70 family. Ssb-type Hsp70 subfamily.</text>
</comment>
<evidence type="ECO:0000250" key="1">
    <source>
        <dbReference type="UniProtKB" id="G0SCU5"/>
    </source>
</evidence>
<evidence type="ECO:0000250" key="2">
    <source>
        <dbReference type="UniProtKB" id="P11484"/>
    </source>
</evidence>
<evidence type="ECO:0000305" key="3"/>
<feature type="chain" id="PRO_0000078398" description="Ribosome-associated molecular chaperone SSB1">
    <location>
        <begin position="1"/>
        <end position="613"/>
    </location>
</feature>
<feature type="region of interest" description="Nucleotide binding domain (NBD)" evidence="1">
    <location>
        <begin position="1"/>
        <end position="391"/>
    </location>
</feature>
<feature type="region of interest" description="Inter-domain linker" evidence="1">
    <location>
        <begin position="392"/>
        <end position="402"/>
    </location>
</feature>
<feature type="region of interest" description="Substrate binding domain (SBD)" evidence="1">
    <location>
        <begin position="403"/>
        <end position="613"/>
    </location>
</feature>
<feature type="region of interest" description="Lid domain (SBDalpha)" evidence="1">
    <location>
        <begin position="516"/>
        <end position="612"/>
    </location>
</feature>
<feature type="short sequence motif" description="Nuclear export signal" evidence="2">
    <location>
        <begin position="574"/>
        <end position="582"/>
    </location>
</feature>
<feature type="binding site" evidence="1">
    <location>
        <begin position="16"/>
        <end position="18"/>
    </location>
    <ligand>
        <name>ATP</name>
        <dbReference type="ChEBI" id="CHEBI:30616"/>
    </ligand>
</feature>
<feature type="binding site" evidence="1">
    <location>
        <position position="73"/>
    </location>
    <ligand>
        <name>ATP</name>
        <dbReference type="ChEBI" id="CHEBI:30616"/>
    </ligand>
</feature>
<feature type="binding site" evidence="1">
    <location>
        <begin position="205"/>
        <end position="207"/>
    </location>
    <ligand>
        <name>ATP</name>
        <dbReference type="ChEBI" id="CHEBI:30616"/>
    </ligand>
</feature>
<feature type="binding site" evidence="1">
    <location>
        <begin position="271"/>
        <end position="278"/>
    </location>
    <ligand>
        <name>ATP</name>
        <dbReference type="ChEBI" id="CHEBI:30616"/>
    </ligand>
</feature>
<feature type="binding site" evidence="1">
    <location>
        <position position="342"/>
    </location>
    <ligand>
        <name>ATP</name>
        <dbReference type="ChEBI" id="CHEBI:30616"/>
    </ligand>
</feature>
<accession>Q707X3</accession>
<accession>C5DTQ5</accession>